<keyword id="KW-0004">4Fe-4S</keyword>
<keyword id="KW-0067">ATP-binding</keyword>
<keyword id="KW-0963">Cytoplasm</keyword>
<keyword id="KW-0408">Iron</keyword>
<keyword id="KW-0411">Iron-sulfur</keyword>
<keyword id="KW-0479">Metal-binding</keyword>
<keyword id="KW-0547">Nucleotide-binding</keyword>
<keyword id="KW-1185">Reference proteome</keyword>
<proteinExistence type="inferred from homology"/>
<name>NUBP2_DROSE</name>
<gene>
    <name evidence="1" type="primary">Nubp2</name>
    <name type="ORF">GM22307</name>
</gene>
<dbReference type="EMBL" id="CH480826">
    <property type="protein sequence ID" value="EDW44244.1"/>
    <property type="molecule type" value="Genomic_DNA"/>
</dbReference>
<dbReference type="SMR" id="B4IAD1"/>
<dbReference type="STRING" id="7238.B4IAD1"/>
<dbReference type="EnsemblMetazoa" id="FBtr0205292">
    <property type="protein sequence ID" value="FBpp0203784"/>
    <property type="gene ID" value="FBgn0177177"/>
</dbReference>
<dbReference type="EnsemblMetazoa" id="XM_002040655.2">
    <property type="protein sequence ID" value="XP_002040691.1"/>
    <property type="gene ID" value="LOC6616331"/>
</dbReference>
<dbReference type="GeneID" id="6616331"/>
<dbReference type="KEGG" id="dse:6616331"/>
<dbReference type="CTD" id="10101"/>
<dbReference type="HOGENOM" id="CLU_024839_0_1_1"/>
<dbReference type="OMA" id="WIPVFAD"/>
<dbReference type="OrthoDB" id="16008at7215"/>
<dbReference type="PhylomeDB" id="B4IAD1"/>
<dbReference type="Proteomes" id="UP000001292">
    <property type="component" value="Unassembled WGS sequence"/>
</dbReference>
<dbReference type="GO" id="GO:0005829">
    <property type="term" value="C:cytosol"/>
    <property type="evidence" value="ECO:0007669"/>
    <property type="project" value="TreeGrafter"/>
</dbReference>
<dbReference type="GO" id="GO:0051539">
    <property type="term" value="F:4 iron, 4 sulfur cluster binding"/>
    <property type="evidence" value="ECO:0007669"/>
    <property type="project" value="UniProtKB-UniRule"/>
</dbReference>
<dbReference type="GO" id="GO:0005524">
    <property type="term" value="F:ATP binding"/>
    <property type="evidence" value="ECO:0007669"/>
    <property type="project" value="UniProtKB-KW"/>
</dbReference>
<dbReference type="GO" id="GO:0140663">
    <property type="term" value="F:ATP-dependent FeS chaperone activity"/>
    <property type="evidence" value="ECO:0007669"/>
    <property type="project" value="InterPro"/>
</dbReference>
<dbReference type="GO" id="GO:0046872">
    <property type="term" value="F:metal ion binding"/>
    <property type="evidence" value="ECO:0007669"/>
    <property type="project" value="UniProtKB-KW"/>
</dbReference>
<dbReference type="GO" id="GO:0016226">
    <property type="term" value="P:iron-sulfur cluster assembly"/>
    <property type="evidence" value="ECO:0007669"/>
    <property type="project" value="UniProtKB-UniRule"/>
</dbReference>
<dbReference type="CDD" id="cd02037">
    <property type="entry name" value="Mrp_NBP35"/>
    <property type="match status" value="1"/>
</dbReference>
<dbReference type="FunFam" id="3.40.50.300:FF:000796">
    <property type="entry name" value="Cytosolic Fe-S cluster assembly factor NUBP2"/>
    <property type="match status" value="1"/>
</dbReference>
<dbReference type="Gene3D" id="3.40.50.300">
    <property type="entry name" value="P-loop containing nucleotide triphosphate hydrolases"/>
    <property type="match status" value="1"/>
</dbReference>
<dbReference type="HAMAP" id="MF_02040">
    <property type="entry name" value="Mrp_NBP35"/>
    <property type="match status" value="1"/>
</dbReference>
<dbReference type="HAMAP" id="MF_03039">
    <property type="entry name" value="NUBP2"/>
    <property type="match status" value="1"/>
</dbReference>
<dbReference type="InterPro" id="IPR000808">
    <property type="entry name" value="Mrp-like_CS"/>
</dbReference>
<dbReference type="InterPro" id="IPR019591">
    <property type="entry name" value="Mrp/NBP35_ATP-bd"/>
</dbReference>
<dbReference type="InterPro" id="IPR028600">
    <property type="entry name" value="NUBP2/Cfd1_eukaryotes"/>
</dbReference>
<dbReference type="InterPro" id="IPR027417">
    <property type="entry name" value="P-loop_NTPase"/>
</dbReference>
<dbReference type="InterPro" id="IPR033756">
    <property type="entry name" value="YlxH/NBP35"/>
</dbReference>
<dbReference type="PANTHER" id="PTHR23264:SF19">
    <property type="entry name" value="CYTOSOLIC FE-S CLUSTER ASSEMBLY FACTOR NUBP2"/>
    <property type="match status" value="1"/>
</dbReference>
<dbReference type="PANTHER" id="PTHR23264">
    <property type="entry name" value="NUCLEOTIDE-BINDING PROTEIN NBP35 YEAST -RELATED"/>
    <property type="match status" value="1"/>
</dbReference>
<dbReference type="Pfam" id="PF10609">
    <property type="entry name" value="ParA"/>
    <property type="match status" value="1"/>
</dbReference>
<dbReference type="SUPFAM" id="SSF52540">
    <property type="entry name" value="P-loop containing nucleoside triphosphate hydrolases"/>
    <property type="match status" value="1"/>
</dbReference>
<dbReference type="PROSITE" id="PS01215">
    <property type="entry name" value="MRP"/>
    <property type="match status" value="1"/>
</dbReference>
<accession>B4IAD1</accession>
<feature type="chain" id="PRO_0000382715" description="Cytosolic Fe-S cluster assembly factor Nubp2 homolog">
    <location>
        <begin position="1"/>
        <end position="260"/>
    </location>
</feature>
<feature type="binding site" evidence="2">
    <location>
        <begin position="14"/>
        <end position="21"/>
    </location>
    <ligand>
        <name>ATP</name>
        <dbReference type="ChEBI" id="CHEBI:30616"/>
    </ligand>
</feature>
<feature type="binding site" evidence="2">
    <location>
        <position position="188"/>
    </location>
    <ligand>
        <name>[4Fe-4S] cluster</name>
        <dbReference type="ChEBI" id="CHEBI:49883"/>
        <note>ligand shared between dimeric partners</note>
    </ligand>
</feature>
<feature type="binding site" evidence="2">
    <location>
        <position position="191"/>
    </location>
    <ligand>
        <name>[4Fe-4S] cluster</name>
        <dbReference type="ChEBI" id="CHEBI:49883"/>
        <note>ligand shared between dimeric partners</note>
    </ligand>
</feature>
<reference key="1">
    <citation type="journal article" date="2007" name="Nature">
        <title>Evolution of genes and genomes on the Drosophila phylogeny.</title>
        <authorList>
            <consortium name="Drosophila 12 genomes consortium"/>
        </authorList>
    </citation>
    <scope>NUCLEOTIDE SEQUENCE [LARGE SCALE GENOMIC DNA]</scope>
    <source>
        <strain>Rob3c / Tucson 14021-0248.25</strain>
    </source>
</reference>
<comment type="function">
    <text evidence="2">Component of the cytosolic iron-sulfur (Fe/S) protein assembly (CIA) machinery. Required for maturation of extramitochondrial Fe-S proteins. The Nubp1-Nubp2 heterotetramer forms a Fe-S scaffold complex, mediating the de novo assembly of an Fe-S cluster and its transfer to target apoproteins.</text>
</comment>
<comment type="cofactor">
    <cofactor evidence="2">
        <name>[4Fe-4S] cluster</name>
        <dbReference type="ChEBI" id="CHEBI:49883"/>
    </cofactor>
    <text evidence="2">Binds 4 [4Fe-4S] clusters per heterotetramer. Contains two stable clusters in the N-termini of Nubp1 and two labile, bridging clusters between subunits of the Nubp1-Nubp2 heterotetramer.</text>
</comment>
<comment type="subunit">
    <text evidence="2">Heterotetramer of 2 Nubp1 and 2 Nubp2 chains.</text>
</comment>
<comment type="subcellular location">
    <subcellularLocation>
        <location evidence="2">Cytoplasm</location>
    </subcellularLocation>
</comment>
<comment type="similarity">
    <text evidence="2">Belongs to the Mrp/NBP35 ATP-binding proteins family. NUBP2/CFD1 subfamily.</text>
</comment>
<protein>
    <recommendedName>
        <fullName evidence="2">Cytosolic Fe-S cluster assembly factor Nubp2 homolog</fullName>
    </recommendedName>
</protein>
<evidence type="ECO:0000250" key="1">
    <source>
        <dbReference type="UniProtKB" id="Q9VPD2"/>
    </source>
</evidence>
<evidence type="ECO:0000255" key="2">
    <source>
        <dbReference type="HAMAP-Rule" id="MF_03039"/>
    </source>
</evidence>
<sequence length="260" mass="28250">MLDKVKNVIVVLSGKGGVGKSTVSTQLSLALRKNGFKVGLLDIDLCGPSVPYLLGLEGRDIFQCDEGWVPVYTDESQTLAVMSIGFLLKNREDPVIWRGPKKTMMIRQFLTDVRWDELDYLIIDTPPGTSDEHITVMECLKEVGCHGAIIVTTPQEVALDDVRKEITFCKKTGINILGIVENMSGFVCPHCTSCTNIFSSNGGVSLATYAQVPHLGTLPIDPRVGVLAGTTTSVLDELPDSTTAEVLTHLVEKLKTMLVS</sequence>
<organism>
    <name type="scientific">Drosophila sechellia</name>
    <name type="common">Fruit fly</name>
    <dbReference type="NCBI Taxonomy" id="7238"/>
    <lineage>
        <taxon>Eukaryota</taxon>
        <taxon>Metazoa</taxon>
        <taxon>Ecdysozoa</taxon>
        <taxon>Arthropoda</taxon>
        <taxon>Hexapoda</taxon>
        <taxon>Insecta</taxon>
        <taxon>Pterygota</taxon>
        <taxon>Neoptera</taxon>
        <taxon>Endopterygota</taxon>
        <taxon>Diptera</taxon>
        <taxon>Brachycera</taxon>
        <taxon>Muscomorpha</taxon>
        <taxon>Ephydroidea</taxon>
        <taxon>Drosophilidae</taxon>
        <taxon>Drosophila</taxon>
        <taxon>Sophophora</taxon>
    </lineage>
</organism>